<protein>
    <recommendedName>
        <fullName evidence="1">Large ribosomal subunit protein uL13</fullName>
    </recommendedName>
    <alternativeName>
        <fullName evidence="2">50S ribosomal protein L13</fullName>
    </alternativeName>
</protein>
<sequence length="142" mass="15891">MKTFVAKPETVKRDWYVVDAEGKTLGRLASEIASRLRGKHKAEYTPHVDTGDYIIVVNAEKVAVTGNKAKGKVYYRHSEFPGGLKTITFEKLIAKKPEMVLELAVKGMLPRGPLGRAMYRKLKVYAGTEHNHVAQQPQVLDI</sequence>
<name>RL13_VIBA3</name>
<organism>
    <name type="scientific">Vibrio atlanticus (strain LGP32)</name>
    <name type="common">Vibrio splendidus (strain Mel32)</name>
    <dbReference type="NCBI Taxonomy" id="575788"/>
    <lineage>
        <taxon>Bacteria</taxon>
        <taxon>Pseudomonadati</taxon>
        <taxon>Pseudomonadota</taxon>
        <taxon>Gammaproteobacteria</taxon>
        <taxon>Vibrionales</taxon>
        <taxon>Vibrionaceae</taxon>
        <taxon>Vibrio</taxon>
    </lineage>
</organism>
<comment type="function">
    <text evidence="1">This protein is one of the early assembly proteins of the 50S ribosomal subunit, although it is not seen to bind rRNA by itself. It is important during the early stages of 50S assembly.</text>
</comment>
<comment type="subunit">
    <text evidence="1">Part of the 50S ribosomal subunit.</text>
</comment>
<comment type="similarity">
    <text evidence="1">Belongs to the universal ribosomal protein uL13 family.</text>
</comment>
<keyword id="KW-0687">Ribonucleoprotein</keyword>
<keyword id="KW-0689">Ribosomal protein</keyword>
<reference key="1">
    <citation type="submission" date="2009-02" db="EMBL/GenBank/DDBJ databases">
        <title>Vibrio splendidus str. LGP32 complete genome.</title>
        <authorList>
            <person name="Mazel D."/>
            <person name="Le Roux F."/>
        </authorList>
    </citation>
    <scope>NUCLEOTIDE SEQUENCE [LARGE SCALE GENOMIC DNA]</scope>
    <source>
        <strain>LGP32</strain>
    </source>
</reference>
<feature type="chain" id="PRO_1000166887" description="Large ribosomal subunit protein uL13">
    <location>
        <begin position="1"/>
        <end position="142"/>
    </location>
</feature>
<evidence type="ECO:0000255" key="1">
    <source>
        <dbReference type="HAMAP-Rule" id="MF_01366"/>
    </source>
</evidence>
<evidence type="ECO:0000305" key="2"/>
<dbReference type="EMBL" id="FM954972">
    <property type="protein sequence ID" value="CAV17437.1"/>
    <property type="molecule type" value="Genomic_DNA"/>
</dbReference>
<dbReference type="SMR" id="B7VIY3"/>
<dbReference type="STRING" id="575788.VS_0429"/>
<dbReference type="KEGG" id="vsp:VS_0429"/>
<dbReference type="eggNOG" id="COG0102">
    <property type="taxonomic scope" value="Bacteria"/>
</dbReference>
<dbReference type="HOGENOM" id="CLU_082184_2_2_6"/>
<dbReference type="Proteomes" id="UP000009100">
    <property type="component" value="Chromosome 1"/>
</dbReference>
<dbReference type="GO" id="GO:0022625">
    <property type="term" value="C:cytosolic large ribosomal subunit"/>
    <property type="evidence" value="ECO:0007669"/>
    <property type="project" value="TreeGrafter"/>
</dbReference>
<dbReference type="GO" id="GO:0003729">
    <property type="term" value="F:mRNA binding"/>
    <property type="evidence" value="ECO:0007669"/>
    <property type="project" value="TreeGrafter"/>
</dbReference>
<dbReference type="GO" id="GO:0003735">
    <property type="term" value="F:structural constituent of ribosome"/>
    <property type="evidence" value="ECO:0007669"/>
    <property type="project" value="InterPro"/>
</dbReference>
<dbReference type="GO" id="GO:0017148">
    <property type="term" value="P:negative regulation of translation"/>
    <property type="evidence" value="ECO:0007669"/>
    <property type="project" value="TreeGrafter"/>
</dbReference>
<dbReference type="GO" id="GO:0006412">
    <property type="term" value="P:translation"/>
    <property type="evidence" value="ECO:0007669"/>
    <property type="project" value="UniProtKB-UniRule"/>
</dbReference>
<dbReference type="CDD" id="cd00392">
    <property type="entry name" value="Ribosomal_L13"/>
    <property type="match status" value="1"/>
</dbReference>
<dbReference type="FunFam" id="3.90.1180.10:FF:000001">
    <property type="entry name" value="50S ribosomal protein L13"/>
    <property type="match status" value="1"/>
</dbReference>
<dbReference type="Gene3D" id="3.90.1180.10">
    <property type="entry name" value="Ribosomal protein L13"/>
    <property type="match status" value="1"/>
</dbReference>
<dbReference type="HAMAP" id="MF_01366">
    <property type="entry name" value="Ribosomal_uL13"/>
    <property type="match status" value="1"/>
</dbReference>
<dbReference type="InterPro" id="IPR005822">
    <property type="entry name" value="Ribosomal_uL13"/>
</dbReference>
<dbReference type="InterPro" id="IPR005823">
    <property type="entry name" value="Ribosomal_uL13_bac-type"/>
</dbReference>
<dbReference type="InterPro" id="IPR023563">
    <property type="entry name" value="Ribosomal_uL13_CS"/>
</dbReference>
<dbReference type="InterPro" id="IPR036899">
    <property type="entry name" value="Ribosomal_uL13_sf"/>
</dbReference>
<dbReference type="NCBIfam" id="TIGR01066">
    <property type="entry name" value="rplM_bact"/>
    <property type="match status" value="1"/>
</dbReference>
<dbReference type="PANTHER" id="PTHR11545:SF2">
    <property type="entry name" value="LARGE RIBOSOMAL SUBUNIT PROTEIN UL13M"/>
    <property type="match status" value="1"/>
</dbReference>
<dbReference type="PANTHER" id="PTHR11545">
    <property type="entry name" value="RIBOSOMAL PROTEIN L13"/>
    <property type="match status" value="1"/>
</dbReference>
<dbReference type="Pfam" id="PF00572">
    <property type="entry name" value="Ribosomal_L13"/>
    <property type="match status" value="1"/>
</dbReference>
<dbReference type="PIRSF" id="PIRSF002181">
    <property type="entry name" value="Ribosomal_L13"/>
    <property type="match status" value="1"/>
</dbReference>
<dbReference type="SUPFAM" id="SSF52161">
    <property type="entry name" value="Ribosomal protein L13"/>
    <property type="match status" value="1"/>
</dbReference>
<dbReference type="PROSITE" id="PS00783">
    <property type="entry name" value="RIBOSOMAL_L13"/>
    <property type="match status" value="1"/>
</dbReference>
<gene>
    <name evidence="1" type="primary">rplM</name>
    <name type="ordered locus">VS_0429</name>
</gene>
<accession>B7VIY3</accession>
<proteinExistence type="inferred from homology"/>